<gene>
    <name evidence="1" type="primary">murD</name>
    <name type="ordered locus">HPAG1_0470</name>
</gene>
<dbReference type="EC" id="6.3.2.9" evidence="1"/>
<dbReference type="EMBL" id="CP000241">
    <property type="protein sequence ID" value="ABF84537.1"/>
    <property type="molecule type" value="Genomic_DNA"/>
</dbReference>
<dbReference type="RefSeq" id="WP_000703470.1">
    <property type="nucleotide sequence ID" value="NC_008086.1"/>
</dbReference>
<dbReference type="SMR" id="Q1CU35"/>
<dbReference type="KEGG" id="hpa:HPAG1_0470"/>
<dbReference type="HOGENOM" id="CLU_032540_2_0_7"/>
<dbReference type="UniPathway" id="UPA00219"/>
<dbReference type="GO" id="GO:0005737">
    <property type="term" value="C:cytoplasm"/>
    <property type="evidence" value="ECO:0007669"/>
    <property type="project" value="UniProtKB-SubCell"/>
</dbReference>
<dbReference type="GO" id="GO:0005524">
    <property type="term" value="F:ATP binding"/>
    <property type="evidence" value="ECO:0007669"/>
    <property type="project" value="UniProtKB-UniRule"/>
</dbReference>
<dbReference type="GO" id="GO:0004326">
    <property type="term" value="F:tetrahydrofolylpolyglutamate synthase activity"/>
    <property type="evidence" value="ECO:0007669"/>
    <property type="project" value="InterPro"/>
</dbReference>
<dbReference type="GO" id="GO:0008764">
    <property type="term" value="F:UDP-N-acetylmuramoylalanine-D-glutamate ligase activity"/>
    <property type="evidence" value="ECO:0007669"/>
    <property type="project" value="UniProtKB-UniRule"/>
</dbReference>
<dbReference type="GO" id="GO:0051301">
    <property type="term" value="P:cell division"/>
    <property type="evidence" value="ECO:0007669"/>
    <property type="project" value="UniProtKB-KW"/>
</dbReference>
<dbReference type="GO" id="GO:0071555">
    <property type="term" value="P:cell wall organization"/>
    <property type="evidence" value="ECO:0007669"/>
    <property type="project" value="UniProtKB-KW"/>
</dbReference>
<dbReference type="GO" id="GO:0009252">
    <property type="term" value="P:peptidoglycan biosynthetic process"/>
    <property type="evidence" value="ECO:0007669"/>
    <property type="project" value="UniProtKB-UniRule"/>
</dbReference>
<dbReference type="GO" id="GO:0008360">
    <property type="term" value="P:regulation of cell shape"/>
    <property type="evidence" value="ECO:0007669"/>
    <property type="project" value="UniProtKB-KW"/>
</dbReference>
<dbReference type="Gene3D" id="3.90.190.20">
    <property type="entry name" value="Mur ligase, C-terminal domain"/>
    <property type="match status" value="1"/>
</dbReference>
<dbReference type="Gene3D" id="3.40.1190.10">
    <property type="entry name" value="Mur-like, catalytic domain"/>
    <property type="match status" value="1"/>
</dbReference>
<dbReference type="Gene3D" id="3.40.50.720">
    <property type="entry name" value="NAD(P)-binding Rossmann-like Domain"/>
    <property type="match status" value="1"/>
</dbReference>
<dbReference type="HAMAP" id="MF_00639">
    <property type="entry name" value="MurD"/>
    <property type="match status" value="1"/>
</dbReference>
<dbReference type="InterPro" id="IPR018109">
    <property type="entry name" value="Folylpolyglutamate_synth_CS"/>
</dbReference>
<dbReference type="InterPro" id="IPR036565">
    <property type="entry name" value="Mur-like_cat_sf"/>
</dbReference>
<dbReference type="InterPro" id="IPR004101">
    <property type="entry name" value="Mur_ligase_C"/>
</dbReference>
<dbReference type="InterPro" id="IPR036615">
    <property type="entry name" value="Mur_ligase_C_dom_sf"/>
</dbReference>
<dbReference type="InterPro" id="IPR013221">
    <property type="entry name" value="Mur_ligase_cen"/>
</dbReference>
<dbReference type="InterPro" id="IPR005762">
    <property type="entry name" value="MurD"/>
</dbReference>
<dbReference type="NCBIfam" id="TIGR01087">
    <property type="entry name" value="murD"/>
    <property type="match status" value="1"/>
</dbReference>
<dbReference type="PANTHER" id="PTHR43692">
    <property type="entry name" value="UDP-N-ACETYLMURAMOYLALANINE--D-GLUTAMATE LIGASE"/>
    <property type="match status" value="1"/>
</dbReference>
<dbReference type="PANTHER" id="PTHR43692:SF1">
    <property type="entry name" value="UDP-N-ACETYLMURAMOYLALANINE--D-GLUTAMATE LIGASE"/>
    <property type="match status" value="1"/>
</dbReference>
<dbReference type="Pfam" id="PF02875">
    <property type="entry name" value="Mur_ligase_C"/>
    <property type="match status" value="1"/>
</dbReference>
<dbReference type="Pfam" id="PF08245">
    <property type="entry name" value="Mur_ligase_M"/>
    <property type="match status" value="1"/>
</dbReference>
<dbReference type="SUPFAM" id="SSF53623">
    <property type="entry name" value="MurD-like peptide ligases, catalytic domain"/>
    <property type="match status" value="1"/>
</dbReference>
<dbReference type="SUPFAM" id="SSF53244">
    <property type="entry name" value="MurD-like peptide ligases, peptide-binding domain"/>
    <property type="match status" value="1"/>
</dbReference>
<organism>
    <name type="scientific">Helicobacter pylori (strain HPAG1)</name>
    <dbReference type="NCBI Taxonomy" id="357544"/>
    <lineage>
        <taxon>Bacteria</taxon>
        <taxon>Pseudomonadati</taxon>
        <taxon>Campylobacterota</taxon>
        <taxon>Epsilonproteobacteria</taxon>
        <taxon>Campylobacterales</taxon>
        <taxon>Helicobacteraceae</taxon>
        <taxon>Helicobacter</taxon>
    </lineage>
</organism>
<name>MURD_HELPH</name>
<keyword id="KW-0067">ATP-binding</keyword>
<keyword id="KW-0131">Cell cycle</keyword>
<keyword id="KW-0132">Cell division</keyword>
<keyword id="KW-0133">Cell shape</keyword>
<keyword id="KW-0961">Cell wall biogenesis/degradation</keyword>
<keyword id="KW-0963">Cytoplasm</keyword>
<keyword id="KW-0436">Ligase</keyword>
<keyword id="KW-0547">Nucleotide-binding</keyword>
<keyword id="KW-0573">Peptidoglycan synthesis</keyword>
<protein>
    <recommendedName>
        <fullName evidence="1">UDP-N-acetylmuramoylalanine--D-glutamate ligase</fullName>
        <ecNumber evidence="1">6.3.2.9</ecNumber>
    </recommendedName>
    <alternativeName>
        <fullName evidence="1">D-glutamic acid-adding enzyme</fullName>
    </alternativeName>
    <alternativeName>
        <fullName evidence="1">UDP-N-acetylmuramoyl-L-alanyl-D-glutamate synthetase</fullName>
    </alternativeName>
</protein>
<reference key="1">
    <citation type="journal article" date="2006" name="Proc. Natl. Acad. Sci. U.S.A.">
        <title>The complete genome sequence of a chronic atrophic gastritis Helicobacter pylori strain: evolution during disease progression.</title>
        <authorList>
            <person name="Oh J.D."/>
            <person name="Kling-Baeckhed H."/>
            <person name="Giannakis M."/>
            <person name="Xu J."/>
            <person name="Fulton R.S."/>
            <person name="Fulton L.A."/>
            <person name="Cordum H.S."/>
            <person name="Wang C."/>
            <person name="Elliott G."/>
            <person name="Edwards J."/>
            <person name="Mardis E.R."/>
            <person name="Engstrand L.G."/>
            <person name="Gordon J.I."/>
        </authorList>
    </citation>
    <scope>NUCLEOTIDE SEQUENCE [LARGE SCALE GENOMIC DNA]</scope>
    <source>
        <strain>HPAG1</strain>
    </source>
</reference>
<feature type="chain" id="PRO_0000257195" description="UDP-N-acetylmuramoylalanine--D-glutamate ligase">
    <location>
        <begin position="1"/>
        <end position="422"/>
    </location>
</feature>
<feature type="binding site" evidence="1">
    <location>
        <begin position="102"/>
        <end position="108"/>
    </location>
    <ligand>
        <name>ATP</name>
        <dbReference type="ChEBI" id="CHEBI:30616"/>
    </ligand>
</feature>
<comment type="function">
    <text evidence="1">Cell wall formation. Catalyzes the addition of glutamate to the nucleotide precursor UDP-N-acetylmuramoyl-L-alanine (UMA).</text>
</comment>
<comment type="catalytic activity">
    <reaction evidence="1">
        <text>UDP-N-acetyl-alpha-D-muramoyl-L-alanine + D-glutamate + ATP = UDP-N-acetyl-alpha-D-muramoyl-L-alanyl-D-glutamate + ADP + phosphate + H(+)</text>
        <dbReference type="Rhea" id="RHEA:16429"/>
        <dbReference type="ChEBI" id="CHEBI:15378"/>
        <dbReference type="ChEBI" id="CHEBI:29986"/>
        <dbReference type="ChEBI" id="CHEBI:30616"/>
        <dbReference type="ChEBI" id="CHEBI:43474"/>
        <dbReference type="ChEBI" id="CHEBI:83898"/>
        <dbReference type="ChEBI" id="CHEBI:83900"/>
        <dbReference type="ChEBI" id="CHEBI:456216"/>
        <dbReference type="EC" id="6.3.2.9"/>
    </reaction>
</comment>
<comment type="pathway">
    <text evidence="1">Cell wall biogenesis; peptidoglycan biosynthesis.</text>
</comment>
<comment type="subcellular location">
    <subcellularLocation>
        <location evidence="1">Cytoplasm</location>
    </subcellularLocation>
</comment>
<comment type="similarity">
    <text evidence="1">Belongs to the MurCDEF family.</text>
</comment>
<sequence length="422" mass="47884">MKISLLGHGKTTLALARFFKKNHNEVKFFDDQFTSFHKDREGFLCHPSKDFNPNDSQLEVVSPGISFTHPLVIKAKHLVSEYDYIDSLFDLVFTPTIISISGTNGKTTTTEMLTMLLEDFKAVSGGNIGTPLIELFEKQSPLWVLETSSFSLHYTNKAYPLIYLLINVEADHLTWHCNFENYLNAKLKVLTLMPKTSLAIIPLKFKEHPIIQNSQAQKIFFDKSEEILECLKIPSNALFFKGAFLLDAALALLVYEQFLKIKNLKWQDYRENALKRLNAFKIGSHKMEEFRDKQGRLWVDDSKATNIDATLQALKTFKNQKIHLIVGGDIKGVNLTPLFEEFKNHEVSLYAIGSSASIIQALALEFNVSCQVCLKLEKAVQEIKSVLSQNEIALLSPSAASLDQFSSYKERGEKFKAFVLKD</sequence>
<accession>Q1CU35</accession>
<proteinExistence type="inferred from homology"/>
<evidence type="ECO:0000255" key="1">
    <source>
        <dbReference type="HAMAP-Rule" id="MF_00639"/>
    </source>
</evidence>